<comment type="function">
    <text evidence="1">Transfers a GMP moiety from GTP to Mo-molybdopterin (Mo-MPT) cofactor (Moco or molybdenum cofactor) to form Mo-molybdopterin guanine dinucleotide (Mo-MGD) cofactor.</text>
</comment>
<comment type="catalytic activity">
    <reaction evidence="1">
        <text>Mo-molybdopterin + GTP + H(+) = Mo-molybdopterin guanine dinucleotide + diphosphate</text>
        <dbReference type="Rhea" id="RHEA:34243"/>
        <dbReference type="ChEBI" id="CHEBI:15378"/>
        <dbReference type="ChEBI" id="CHEBI:33019"/>
        <dbReference type="ChEBI" id="CHEBI:37565"/>
        <dbReference type="ChEBI" id="CHEBI:71302"/>
        <dbReference type="ChEBI" id="CHEBI:71310"/>
        <dbReference type="EC" id="2.7.7.77"/>
    </reaction>
</comment>
<comment type="cofactor">
    <cofactor evidence="1">
        <name>Mg(2+)</name>
        <dbReference type="ChEBI" id="CHEBI:18420"/>
    </cofactor>
</comment>
<comment type="subcellular location">
    <subcellularLocation>
        <location evidence="1">Cytoplasm</location>
    </subcellularLocation>
</comment>
<comment type="domain">
    <text evidence="1">The N-terminal domain determines nucleotide recognition and specific binding, while the C-terminal domain determines the specific binding to the target protein.</text>
</comment>
<comment type="similarity">
    <text evidence="1">Belongs to the MobA family.</text>
</comment>
<sequence>MKAIILAGGHSVRFGKPKAFAEVNGETFYSRVIKTLESTNMFNEIIISTNAQLATQFKYPNVVIDDENHNDKGPLAGIYTIMKQHPEEELFFVVSVDTPMITGKAVSTLYQFLVSHLIENHLDVAAFKEDGRFIPTIAFYSPNALGAITKALHSDNYSFKNIYHELSTDYLDVRDVDAPSYWYKNINYQHDLDALIQKL</sequence>
<feature type="chain" id="PRO_1000019155" description="Probable molybdenum cofactor guanylyltransferase">
    <location>
        <begin position="1"/>
        <end position="199"/>
    </location>
</feature>
<feature type="binding site" evidence="1">
    <location>
        <begin position="6"/>
        <end position="8"/>
    </location>
    <ligand>
        <name>GTP</name>
        <dbReference type="ChEBI" id="CHEBI:37565"/>
    </ligand>
</feature>
<feature type="binding site" evidence="1">
    <location>
        <position position="18"/>
    </location>
    <ligand>
        <name>GTP</name>
        <dbReference type="ChEBI" id="CHEBI:37565"/>
    </ligand>
</feature>
<feature type="binding site" evidence="1">
    <location>
        <position position="65"/>
    </location>
    <ligand>
        <name>GTP</name>
        <dbReference type="ChEBI" id="CHEBI:37565"/>
    </ligand>
</feature>
<feature type="binding site" evidence="1">
    <location>
        <position position="97"/>
    </location>
    <ligand>
        <name>GTP</name>
        <dbReference type="ChEBI" id="CHEBI:37565"/>
    </ligand>
</feature>
<feature type="binding site" evidence="1">
    <location>
        <position position="97"/>
    </location>
    <ligand>
        <name>Mg(2+)</name>
        <dbReference type="ChEBI" id="CHEBI:18420"/>
    </ligand>
</feature>
<protein>
    <recommendedName>
        <fullName evidence="1">Probable molybdenum cofactor guanylyltransferase</fullName>
        <shortName evidence="1">MoCo guanylyltransferase</shortName>
        <ecNumber evidence="1">2.7.7.77</ecNumber>
    </recommendedName>
    <alternativeName>
        <fullName evidence="1">GTP:molybdopterin guanylyltransferase</fullName>
    </alternativeName>
    <alternativeName>
        <fullName evidence="1">Mo-MPT guanylyltransferase</fullName>
    </alternativeName>
    <alternativeName>
        <fullName evidence="1">Molybdopterin guanylyltransferase</fullName>
    </alternativeName>
    <alternativeName>
        <fullName evidence="1">Molybdopterin-guanine dinucleotide synthase</fullName>
        <shortName evidence="1">MGD synthase</shortName>
    </alternativeName>
</protein>
<accession>A7X5J2</accession>
<dbReference type="EC" id="2.7.7.77" evidence="1"/>
<dbReference type="EMBL" id="AP009324">
    <property type="protein sequence ID" value="BAF79136.1"/>
    <property type="molecule type" value="Genomic_DNA"/>
</dbReference>
<dbReference type="RefSeq" id="WP_000643986.1">
    <property type="nucleotide sequence ID" value="NC_009782.1"/>
</dbReference>
<dbReference type="SMR" id="A7X5J2"/>
<dbReference type="KEGG" id="saw:SAHV_2253"/>
<dbReference type="HOGENOM" id="CLU_055597_2_0_9"/>
<dbReference type="GO" id="GO:0005737">
    <property type="term" value="C:cytoplasm"/>
    <property type="evidence" value="ECO:0007669"/>
    <property type="project" value="UniProtKB-SubCell"/>
</dbReference>
<dbReference type="GO" id="GO:0005525">
    <property type="term" value="F:GTP binding"/>
    <property type="evidence" value="ECO:0007669"/>
    <property type="project" value="UniProtKB-UniRule"/>
</dbReference>
<dbReference type="GO" id="GO:0046872">
    <property type="term" value="F:metal ion binding"/>
    <property type="evidence" value="ECO:0007669"/>
    <property type="project" value="UniProtKB-KW"/>
</dbReference>
<dbReference type="GO" id="GO:0061603">
    <property type="term" value="F:molybdenum cofactor guanylyltransferase activity"/>
    <property type="evidence" value="ECO:0007669"/>
    <property type="project" value="UniProtKB-EC"/>
</dbReference>
<dbReference type="GO" id="GO:0006777">
    <property type="term" value="P:Mo-molybdopterin cofactor biosynthetic process"/>
    <property type="evidence" value="ECO:0007669"/>
    <property type="project" value="UniProtKB-KW"/>
</dbReference>
<dbReference type="CDD" id="cd02503">
    <property type="entry name" value="MobA"/>
    <property type="match status" value="1"/>
</dbReference>
<dbReference type="Gene3D" id="3.90.550.10">
    <property type="entry name" value="Spore Coat Polysaccharide Biosynthesis Protein SpsA, Chain A"/>
    <property type="match status" value="1"/>
</dbReference>
<dbReference type="HAMAP" id="MF_00316">
    <property type="entry name" value="MobA"/>
    <property type="match status" value="1"/>
</dbReference>
<dbReference type="InterPro" id="IPR025877">
    <property type="entry name" value="MobA-like_NTP_Trfase"/>
</dbReference>
<dbReference type="InterPro" id="IPR013482">
    <property type="entry name" value="Molybde_CF_guanTrfase"/>
</dbReference>
<dbReference type="InterPro" id="IPR029044">
    <property type="entry name" value="Nucleotide-diphossugar_trans"/>
</dbReference>
<dbReference type="NCBIfam" id="NF001457">
    <property type="entry name" value="PRK00317.1-3"/>
    <property type="match status" value="1"/>
</dbReference>
<dbReference type="PANTHER" id="PTHR19136">
    <property type="entry name" value="MOLYBDENUM COFACTOR GUANYLYLTRANSFERASE"/>
    <property type="match status" value="1"/>
</dbReference>
<dbReference type="PANTHER" id="PTHR19136:SF81">
    <property type="entry name" value="MOLYBDENUM COFACTOR GUANYLYLTRANSFERASE"/>
    <property type="match status" value="1"/>
</dbReference>
<dbReference type="Pfam" id="PF12804">
    <property type="entry name" value="NTP_transf_3"/>
    <property type="match status" value="1"/>
</dbReference>
<dbReference type="SUPFAM" id="SSF53448">
    <property type="entry name" value="Nucleotide-diphospho-sugar transferases"/>
    <property type="match status" value="1"/>
</dbReference>
<evidence type="ECO:0000255" key="1">
    <source>
        <dbReference type="HAMAP-Rule" id="MF_00316"/>
    </source>
</evidence>
<gene>
    <name evidence="1" type="primary">mobA</name>
    <name type="ordered locus">SAHV_2253</name>
</gene>
<organism>
    <name type="scientific">Staphylococcus aureus (strain Mu3 / ATCC 700698)</name>
    <dbReference type="NCBI Taxonomy" id="418127"/>
    <lineage>
        <taxon>Bacteria</taxon>
        <taxon>Bacillati</taxon>
        <taxon>Bacillota</taxon>
        <taxon>Bacilli</taxon>
        <taxon>Bacillales</taxon>
        <taxon>Staphylococcaceae</taxon>
        <taxon>Staphylococcus</taxon>
    </lineage>
</organism>
<keyword id="KW-0963">Cytoplasm</keyword>
<keyword id="KW-0342">GTP-binding</keyword>
<keyword id="KW-0460">Magnesium</keyword>
<keyword id="KW-0479">Metal-binding</keyword>
<keyword id="KW-0501">Molybdenum cofactor biosynthesis</keyword>
<keyword id="KW-0547">Nucleotide-binding</keyword>
<keyword id="KW-0808">Transferase</keyword>
<proteinExistence type="inferred from homology"/>
<name>MOBA_STAA1</name>
<reference key="1">
    <citation type="journal article" date="2008" name="Antimicrob. Agents Chemother.">
        <title>Mutated response regulator graR is responsible for phenotypic conversion of Staphylococcus aureus from heterogeneous vancomycin-intermediate resistance to vancomycin-intermediate resistance.</title>
        <authorList>
            <person name="Neoh H.-M."/>
            <person name="Cui L."/>
            <person name="Yuzawa H."/>
            <person name="Takeuchi F."/>
            <person name="Matsuo M."/>
            <person name="Hiramatsu K."/>
        </authorList>
    </citation>
    <scope>NUCLEOTIDE SEQUENCE [LARGE SCALE GENOMIC DNA]</scope>
    <source>
        <strain>Mu3 / ATCC 700698</strain>
    </source>
</reference>